<feature type="chain" id="PRO_1000214378" description="Small ribosomal subunit protein uS11">
    <location>
        <begin position="1"/>
        <end position="129"/>
    </location>
</feature>
<proteinExistence type="inferred from homology"/>
<name>RS11_TOLAT</name>
<dbReference type="EMBL" id="CP001616">
    <property type="protein sequence ID" value="ACQ91752.1"/>
    <property type="molecule type" value="Genomic_DNA"/>
</dbReference>
<dbReference type="RefSeq" id="WP_012728351.1">
    <property type="nucleotide sequence ID" value="NC_012691.1"/>
</dbReference>
<dbReference type="SMR" id="C4L7V3"/>
<dbReference type="STRING" id="595494.Tola_0122"/>
<dbReference type="KEGG" id="tau:Tola_0122"/>
<dbReference type="eggNOG" id="COG0100">
    <property type="taxonomic scope" value="Bacteria"/>
</dbReference>
<dbReference type="HOGENOM" id="CLU_072439_5_0_6"/>
<dbReference type="OrthoDB" id="9806415at2"/>
<dbReference type="Proteomes" id="UP000009073">
    <property type="component" value="Chromosome"/>
</dbReference>
<dbReference type="GO" id="GO:1990904">
    <property type="term" value="C:ribonucleoprotein complex"/>
    <property type="evidence" value="ECO:0007669"/>
    <property type="project" value="UniProtKB-KW"/>
</dbReference>
<dbReference type="GO" id="GO:0005840">
    <property type="term" value="C:ribosome"/>
    <property type="evidence" value="ECO:0007669"/>
    <property type="project" value="UniProtKB-KW"/>
</dbReference>
<dbReference type="GO" id="GO:0019843">
    <property type="term" value="F:rRNA binding"/>
    <property type="evidence" value="ECO:0007669"/>
    <property type="project" value="UniProtKB-UniRule"/>
</dbReference>
<dbReference type="GO" id="GO:0003735">
    <property type="term" value="F:structural constituent of ribosome"/>
    <property type="evidence" value="ECO:0007669"/>
    <property type="project" value="InterPro"/>
</dbReference>
<dbReference type="GO" id="GO:0006412">
    <property type="term" value="P:translation"/>
    <property type="evidence" value="ECO:0007669"/>
    <property type="project" value="UniProtKB-UniRule"/>
</dbReference>
<dbReference type="FunFam" id="3.30.420.80:FF:000001">
    <property type="entry name" value="30S ribosomal protein S11"/>
    <property type="match status" value="1"/>
</dbReference>
<dbReference type="Gene3D" id="3.30.420.80">
    <property type="entry name" value="Ribosomal protein S11"/>
    <property type="match status" value="1"/>
</dbReference>
<dbReference type="HAMAP" id="MF_01310">
    <property type="entry name" value="Ribosomal_uS11"/>
    <property type="match status" value="1"/>
</dbReference>
<dbReference type="InterPro" id="IPR001971">
    <property type="entry name" value="Ribosomal_uS11"/>
</dbReference>
<dbReference type="InterPro" id="IPR019981">
    <property type="entry name" value="Ribosomal_uS11_bac-type"/>
</dbReference>
<dbReference type="InterPro" id="IPR018102">
    <property type="entry name" value="Ribosomal_uS11_CS"/>
</dbReference>
<dbReference type="InterPro" id="IPR036967">
    <property type="entry name" value="Ribosomal_uS11_sf"/>
</dbReference>
<dbReference type="NCBIfam" id="NF003698">
    <property type="entry name" value="PRK05309.1"/>
    <property type="match status" value="1"/>
</dbReference>
<dbReference type="NCBIfam" id="TIGR03632">
    <property type="entry name" value="uS11_bact"/>
    <property type="match status" value="1"/>
</dbReference>
<dbReference type="PANTHER" id="PTHR11759">
    <property type="entry name" value="40S RIBOSOMAL PROTEIN S14/30S RIBOSOMAL PROTEIN S11"/>
    <property type="match status" value="1"/>
</dbReference>
<dbReference type="Pfam" id="PF00411">
    <property type="entry name" value="Ribosomal_S11"/>
    <property type="match status" value="1"/>
</dbReference>
<dbReference type="PIRSF" id="PIRSF002131">
    <property type="entry name" value="Ribosomal_S11"/>
    <property type="match status" value="1"/>
</dbReference>
<dbReference type="SUPFAM" id="SSF53137">
    <property type="entry name" value="Translational machinery components"/>
    <property type="match status" value="1"/>
</dbReference>
<dbReference type="PROSITE" id="PS00054">
    <property type="entry name" value="RIBOSOMAL_S11"/>
    <property type="match status" value="1"/>
</dbReference>
<protein>
    <recommendedName>
        <fullName evidence="1">Small ribosomal subunit protein uS11</fullName>
    </recommendedName>
    <alternativeName>
        <fullName evidence="2">30S ribosomal protein S11</fullName>
    </alternativeName>
</protein>
<keyword id="KW-1185">Reference proteome</keyword>
<keyword id="KW-0687">Ribonucleoprotein</keyword>
<keyword id="KW-0689">Ribosomal protein</keyword>
<keyword id="KW-0694">RNA-binding</keyword>
<keyword id="KW-0699">rRNA-binding</keyword>
<gene>
    <name evidence="1" type="primary">rpsK</name>
    <name type="ordered locus">Tola_0122</name>
</gene>
<evidence type="ECO:0000255" key="1">
    <source>
        <dbReference type="HAMAP-Rule" id="MF_01310"/>
    </source>
</evidence>
<evidence type="ECO:0000305" key="2"/>
<sequence length="129" mass="13817">MAKAPTRARKRVRKQVSDGIAHVHASFNNTIVTITDRQGNALSWATAGGSGFRGSRKSTPFAAQVAAERAGEIAKEYGVKNLEVMVKGPGPGRESSIRALNAAGFRITNITDVTPIPHNGCRPPKKRRV</sequence>
<comment type="function">
    <text evidence="1">Located on the platform of the 30S subunit, it bridges several disparate RNA helices of the 16S rRNA. Forms part of the Shine-Dalgarno cleft in the 70S ribosome.</text>
</comment>
<comment type="subunit">
    <text evidence="1">Part of the 30S ribosomal subunit. Interacts with proteins S7 and S18. Binds to IF-3.</text>
</comment>
<comment type="similarity">
    <text evidence="1">Belongs to the universal ribosomal protein uS11 family.</text>
</comment>
<organism>
    <name type="scientific">Tolumonas auensis (strain DSM 9187 / NBRC 110442 / TA 4)</name>
    <dbReference type="NCBI Taxonomy" id="595494"/>
    <lineage>
        <taxon>Bacteria</taxon>
        <taxon>Pseudomonadati</taxon>
        <taxon>Pseudomonadota</taxon>
        <taxon>Gammaproteobacteria</taxon>
        <taxon>Aeromonadales</taxon>
        <taxon>Aeromonadaceae</taxon>
        <taxon>Tolumonas</taxon>
    </lineage>
</organism>
<accession>C4L7V3</accession>
<reference key="1">
    <citation type="submission" date="2009-05" db="EMBL/GenBank/DDBJ databases">
        <title>Complete sequence of Tolumonas auensis DSM 9187.</title>
        <authorList>
            <consortium name="US DOE Joint Genome Institute"/>
            <person name="Lucas S."/>
            <person name="Copeland A."/>
            <person name="Lapidus A."/>
            <person name="Glavina del Rio T."/>
            <person name="Tice H."/>
            <person name="Bruce D."/>
            <person name="Goodwin L."/>
            <person name="Pitluck S."/>
            <person name="Chertkov O."/>
            <person name="Brettin T."/>
            <person name="Detter J.C."/>
            <person name="Han C."/>
            <person name="Larimer F."/>
            <person name="Land M."/>
            <person name="Hauser L."/>
            <person name="Kyrpides N."/>
            <person name="Mikhailova N."/>
            <person name="Spring S."/>
            <person name="Beller H."/>
        </authorList>
    </citation>
    <scope>NUCLEOTIDE SEQUENCE [LARGE SCALE GENOMIC DNA]</scope>
    <source>
        <strain>DSM 9187 / NBRC 110442 / TA 4</strain>
    </source>
</reference>